<organism>
    <name type="scientific">Burkholderia cenocepacia (strain HI2424)</name>
    <dbReference type="NCBI Taxonomy" id="331272"/>
    <lineage>
        <taxon>Bacteria</taxon>
        <taxon>Pseudomonadati</taxon>
        <taxon>Pseudomonadota</taxon>
        <taxon>Betaproteobacteria</taxon>
        <taxon>Burkholderiales</taxon>
        <taxon>Burkholderiaceae</taxon>
        <taxon>Burkholderia</taxon>
        <taxon>Burkholderia cepacia complex</taxon>
    </lineage>
</organism>
<reference key="1">
    <citation type="submission" date="2006-08" db="EMBL/GenBank/DDBJ databases">
        <title>Complete sequence of chromosome 1 of Burkholderia cenocepacia HI2424.</title>
        <authorList>
            <person name="Copeland A."/>
            <person name="Lucas S."/>
            <person name="Lapidus A."/>
            <person name="Barry K."/>
            <person name="Detter J.C."/>
            <person name="Glavina del Rio T."/>
            <person name="Hammon N."/>
            <person name="Israni S."/>
            <person name="Pitluck S."/>
            <person name="Chain P."/>
            <person name="Malfatti S."/>
            <person name="Shin M."/>
            <person name="Vergez L."/>
            <person name="Schmutz J."/>
            <person name="Larimer F."/>
            <person name="Land M."/>
            <person name="Hauser L."/>
            <person name="Kyrpides N."/>
            <person name="Kim E."/>
            <person name="LiPuma J.J."/>
            <person name="Gonzalez C.F."/>
            <person name="Konstantinidis K."/>
            <person name="Tiedje J.M."/>
            <person name="Richardson P."/>
        </authorList>
    </citation>
    <scope>NUCLEOTIDE SEQUENCE [LARGE SCALE GENOMIC DNA]</scope>
    <source>
        <strain>HI2424</strain>
    </source>
</reference>
<evidence type="ECO:0000255" key="1">
    <source>
        <dbReference type="PROSITE-ProRule" id="PRU01182"/>
    </source>
</evidence>
<evidence type="ECO:0000256" key="2">
    <source>
        <dbReference type="SAM" id="MobiDB-lite"/>
    </source>
</evidence>
<evidence type="ECO:0000305" key="3"/>
<feature type="chain" id="PRO_0000322669" description="UPF0758 protein Bcen2424_2501">
    <location>
        <begin position="1"/>
        <end position="257"/>
    </location>
</feature>
<feature type="domain" description="MPN" evidence="1">
    <location>
        <begin position="135"/>
        <end position="257"/>
    </location>
</feature>
<feature type="region of interest" description="Disordered" evidence="2">
    <location>
        <begin position="1"/>
        <end position="53"/>
    </location>
</feature>
<feature type="short sequence motif" description="JAMM motif" evidence="1">
    <location>
        <begin position="206"/>
        <end position="219"/>
    </location>
</feature>
<feature type="compositionally biased region" description="Basic and acidic residues" evidence="2">
    <location>
        <begin position="37"/>
        <end position="51"/>
    </location>
</feature>
<feature type="binding site" evidence="1">
    <location>
        <position position="206"/>
    </location>
    <ligand>
        <name>Zn(2+)</name>
        <dbReference type="ChEBI" id="CHEBI:29105"/>
        <note>catalytic</note>
    </ligand>
</feature>
<feature type="binding site" evidence="1">
    <location>
        <position position="208"/>
    </location>
    <ligand>
        <name>Zn(2+)</name>
        <dbReference type="ChEBI" id="CHEBI:29105"/>
        <note>catalytic</note>
    </ligand>
</feature>
<feature type="binding site" evidence="1">
    <location>
        <position position="219"/>
    </location>
    <ligand>
        <name>Zn(2+)</name>
        <dbReference type="ChEBI" id="CHEBI:29105"/>
        <note>catalytic</note>
    </ligand>
</feature>
<protein>
    <recommendedName>
        <fullName>UPF0758 protein Bcen2424_2501</fullName>
    </recommendedName>
</protein>
<accession>A0K9S4</accession>
<sequence>MLSPCPILPSAECRDTADTPADPPGRVIPINRRRRRPGDWRPERPRERLLERGPAALTDDELIALLLGTGKPGHDVFVTARALVDQFGTLHGLLEATADDFEAHPGIGPARSARLVAVTEIARRMLVEKAEERMQIDSPGAVEDCLRLKIGTRQYEVFIAVYLDARNRLIDMEEIARGSLTRMAVYPREIVRRAMKHNAAALIVAHNHPSGAVQPSAEDRRLTRVLKDALELVDVRLLDHVVVGVSDTFSFARAGWL</sequence>
<dbReference type="EMBL" id="CP000458">
    <property type="protein sequence ID" value="ABK09251.1"/>
    <property type="molecule type" value="Genomic_DNA"/>
</dbReference>
<dbReference type="SMR" id="A0K9S4"/>
<dbReference type="KEGG" id="bch:Bcen2424_2501"/>
<dbReference type="HOGENOM" id="CLU_073529_0_0_4"/>
<dbReference type="GO" id="GO:0046872">
    <property type="term" value="F:metal ion binding"/>
    <property type="evidence" value="ECO:0007669"/>
    <property type="project" value="UniProtKB-KW"/>
</dbReference>
<dbReference type="GO" id="GO:0008237">
    <property type="term" value="F:metallopeptidase activity"/>
    <property type="evidence" value="ECO:0007669"/>
    <property type="project" value="UniProtKB-KW"/>
</dbReference>
<dbReference type="GO" id="GO:0006508">
    <property type="term" value="P:proteolysis"/>
    <property type="evidence" value="ECO:0007669"/>
    <property type="project" value="UniProtKB-KW"/>
</dbReference>
<dbReference type="CDD" id="cd08071">
    <property type="entry name" value="MPN_DUF2466"/>
    <property type="match status" value="1"/>
</dbReference>
<dbReference type="Gene3D" id="1.10.150.20">
    <property type="entry name" value="5' to 3' exonuclease, C-terminal subdomain"/>
    <property type="match status" value="1"/>
</dbReference>
<dbReference type="Gene3D" id="3.40.140.10">
    <property type="entry name" value="Cytidine Deaminase, domain 2"/>
    <property type="match status" value="1"/>
</dbReference>
<dbReference type="InterPro" id="IPR037518">
    <property type="entry name" value="MPN"/>
</dbReference>
<dbReference type="InterPro" id="IPR025657">
    <property type="entry name" value="RadC_JAB"/>
</dbReference>
<dbReference type="InterPro" id="IPR010994">
    <property type="entry name" value="RuvA_2-like"/>
</dbReference>
<dbReference type="InterPro" id="IPR001405">
    <property type="entry name" value="UPF0758"/>
</dbReference>
<dbReference type="InterPro" id="IPR020891">
    <property type="entry name" value="UPF0758_CS"/>
</dbReference>
<dbReference type="InterPro" id="IPR046778">
    <property type="entry name" value="UPF0758_N"/>
</dbReference>
<dbReference type="NCBIfam" id="NF000642">
    <property type="entry name" value="PRK00024.1"/>
    <property type="match status" value="1"/>
</dbReference>
<dbReference type="NCBIfam" id="TIGR00608">
    <property type="entry name" value="radc"/>
    <property type="match status" value="1"/>
</dbReference>
<dbReference type="PANTHER" id="PTHR30471">
    <property type="entry name" value="DNA REPAIR PROTEIN RADC"/>
    <property type="match status" value="1"/>
</dbReference>
<dbReference type="PANTHER" id="PTHR30471:SF3">
    <property type="entry name" value="UPF0758 PROTEIN YEES-RELATED"/>
    <property type="match status" value="1"/>
</dbReference>
<dbReference type="Pfam" id="PF04002">
    <property type="entry name" value="RadC"/>
    <property type="match status" value="1"/>
</dbReference>
<dbReference type="Pfam" id="PF20582">
    <property type="entry name" value="UPF0758_N"/>
    <property type="match status" value="1"/>
</dbReference>
<dbReference type="SUPFAM" id="SSF102712">
    <property type="entry name" value="JAB1/MPN domain"/>
    <property type="match status" value="1"/>
</dbReference>
<dbReference type="SUPFAM" id="SSF47781">
    <property type="entry name" value="RuvA domain 2-like"/>
    <property type="match status" value="1"/>
</dbReference>
<dbReference type="PROSITE" id="PS50249">
    <property type="entry name" value="MPN"/>
    <property type="match status" value="1"/>
</dbReference>
<dbReference type="PROSITE" id="PS01302">
    <property type="entry name" value="UPF0758"/>
    <property type="match status" value="1"/>
</dbReference>
<name>Y2501_BURCH</name>
<gene>
    <name type="ordered locus">Bcen2424_2501</name>
</gene>
<keyword id="KW-0378">Hydrolase</keyword>
<keyword id="KW-0479">Metal-binding</keyword>
<keyword id="KW-0482">Metalloprotease</keyword>
<keyword id="KW-0645">Protease</keyword>
<keyword id="KW-0862">Zinc</keyword>
<comment type="similarity">
    <text evidence="3">Belongs to the UPF0758 family.</text>
</comment>
<proteinExistence type="inferred from homology"/>